<gene>
    <name evidence="1" type="primary">smpB</name>
    <name type="ordered locus">RPC_2631</name>
</gene>
<feature type="chain" id="PRO_1000002127" description="SsrA-binding protein">
    <location>
        <begin position="1"/>
        <end position="157"/>
    </location>
</feature>
<feature type="region of interest" description="Disordered" evidence="2">
    <location>
        <begin position="131"/>
        <end position="157"/>
    </location>
</feature>
<feature type="compositionally biased region" description="Basic and acidic residues" evidence="2">
    <location>
        <begin position="132"/>
        <end position="151"/>
    </location>
</feature>
<dbReference type="EMBL" id="CP000301">
    <property type="protein sequence ID" value="ABD88181.1"/>
    <property type="molecule type" value="Genomic_DNA"/>
</dbReference>
<dbReference type="SMR" id="Q214K5"/>
<dbReference type="STRING" id="316056.RPC_2631"/>
<dbReference type="KEGG" id="rpc:RPC_2631"/>
<dbReference type="eggNOG" id="COG0691">
    <property type="taxonomic scope" value="Bacteria"/>
</dbReference>
<dbReference type="HOGENOM" id="CLU_108953_0_1_5"/>
<dbReference type="OrthoDB" id="9805462at2"/>
<dbReference type="GO" id="GO:0005829">
    <property type="term" value="C:cytosol"/>
    <property type="evidence" value="ECO:0007669"/>
    <property type="project" value="TreeGrafter"/>
</dbReference>
<dbReference type="GO" id="GO:0003723">
    <property type="term" value="F:RNA binding"/>
    <property type="evidence" value="ECO:0007669"/>
    <property type="project" value="UniProtKB-UniRule"/>
</dbReference>
<dbReference type="GO" id="GO:0070929">
    <property type="term" value="P:trans-translation"/>
    <property type="evidence" value="ECO:0007669"/>
    <property type="project" value="UniProtKB-UniRule"/>
</dbReference>
<dbReference type="CDD" id="cd09294">
    <property type="entry name" value="SmpB"/>
    <property type="match status" value="1"/>
</dbReference>
<dbReference type="Gene3D" id="2.40.280.10">
    <property type="match status" value="1"/>
</dbReference>
<dbReference type="HAMAP" id="MF_00023">
    <property type="entry name" value="SmpB"/>
    <property type="match status" value="1"/>
</dbReference>
<dbReference type="InterPro" id="IPR023620">
    <property type="entry name" value="SmpB"/>
</dbReference>
<dbReference type="InterPro" id="IPR000037">
    <property type="entry name" value="SsrA-bd_prot"/>
</dbReference>
<dbReference type="InterPro" id="IPR020081">
    <property type="entry name" value="SsrA-bd_prot_CS"/>
</dbReference>
<dbReference type="NCBIfam" id="NF003843">
    <property type="entry name" value="PRK05422.1"/>
    <property type="match status" value="1"/>
</dbReference>
<dbReference type="NCBIfam" id="TIGR00086">
    <property type="entry name" value="smpB"/>
    <property type="match status" value="1"/>
</dbReference>
<dbReference type="PANTHER" id="PTHR30308:SF2">
    <property type="entry name" value="SSRA-BINDING PROTEIN"/>
    <property type="match status" value="1"/>
</dbReference>
<dbReference type="PANTHER" id="PTHR30308">
    <property type="entry name" value="TMRNA-BINDING COMPONENT OF TRANS-TRANSLATION TAGGING COMPLEX"/>
    <property type="match status" value="1"/>
</dbReference>
<dbReference type="Pfam" id="PF01668">
    <property type="entry name" value="SmpB"/>
    <property type="match status" value="1"/>
</dbReference>
<dbReference type="SUPFAM" id="SSF74982">
    <property type="entry name" value="Small protein B (SmpB)"/>
    <property type="match status" value="1"/>
</dbReference>
<dbReference type="PROSITE" id="PS01317">
    <property type="entry name" value="SSRP"/>
    <property type="match status" value="1"/>
</dbReference>
<proteinExistence type="inferred from homology"/>
<protein>
    <recommendedName>
        <fullName evidence="1">SsrA-binding protein</fullName>
    </recommendedName>
    <alternativeName>
        <fullName evidence="1">Small protein B</fullName>
    </alternativeName>
</protein>
<comment type="function">
    <text evidence="1">Required for rescue of stalled ribosomes mediated by trans-translation. Binds to transfer-messenger RNA (tmRNA), required for stable association of tmRNA with ribosomes. tmRNA and SmpB together mimic tRNA shape, replacing the anticodon stem-loop with SmpB. tmRNA is encoded by the ssrA gene; the 2 termini fold to resemble tRNA(Ala) and it encodes a 'tag peptide', a short internal open reading frame. During trans-translation Ala-aminoacylated tmRNA acts like a tRNA, entering the A-site of stalled ribosomes, displacing the stalled mRNA. The ribosome then switches to translate the ORF on the tmRNA; the nascent peptide is terminated with the 'tag peptide' encoded by the tmRNA and targeted for degradation. The ribosome is freed to recommence translation, which seems to be the essential function of trans-translation.</text>
</comment>
<comment type="subcellular location">
    <subcellularLocation>
        <location evidence="1">Cytoplasm</location>
    </subcellularLocation>
    <text evidence="1">The tmRNA-SmpB complex associates with stalled 70S ribosomes.</text>
</comment>
<comment type="similarity">
    <text evidence="1">Belongs to the SmpB family.</text>
</comment>
<sequence length="157" mass="18222">MAEKNERPIKVIAENRKARFNYAIEDTLEAGIALTGTEVKSIRNGKSTIAESYADPKDGEIWLINANIPEYLQANRFNHEPKRPRKLLLHRKQINKLMGAVERQGMTLVPLKMYFNERGRVKLQLALAKGKQLHDKRDTEKKRDWSREKGRIMRARG</sequence>
<organism>
    <name type="scientific">Rhodopseudomonas palustris (strain BisB18)</name>
    <dbReference type="NCBI Taxonomy" id="316056"/>
    <lineage>
        <taxon>Bacteria</taxon>
        <taxon>Pseudomonadati</taxon>
        <taxon>Pseudomonadota</taxon>
        <taxon>Alphaproteobacteria</taxon>
        <taxon>Hyphomicrobiales</taxon>
        <taxon>Nitrobacteraceae</taxon>
        <taxon>Rhodopseudomonas</taxon>
    </lineage>
</organism>
<evidence type="ECO:0000255" key="1">
    <source>
        <dbReference type="HAMAP-Rule" id="MF_00023"/>
    </source>
</evidence>
<evidence type="ECO:0000256" key="2">
    <source>
        <dbReference type="SAM" id="MobiDB-lite"/>
    </source>
</evidence>
<keyword id="KW-0963">Cytoplasm</keyword>
<keyword id="KW-0694">RNA-binding</keyword>
<name>SSRP_RHOPB</name>
<accession>Q214K5</accession>
<reference key="1">
    <citation type="submission" date="2006-03" db="EMBL/GenBank/DDBJ databases">
        <title>Complete sequence of Rhodopseudomonas palustris BisB18.</title>
        <authorList>
            <consortium name="US DOE Joint Genome Institute"/>
            <person name="Copeland A."/>
            <person name="Lucas S."/>
            <person name="Lapidus A."/>
            <person name="Barry K."/>
            <person name="Detter J.C."/>
            <person name="Glavina del Rio T."/>
            <person name="Hammon N."/>
            <person name="Israni S."/>
            <person name="Dalin E."/>
            <person name="Tice H."/>
            <person name="Pitluck S."/>
            <person name="Chain P."/>
            <person name="Malfatti S."/>
            <person name="Shin M."/>
            <person name="Vergez L."/>
            <person name="Schmutz J."/>
            <person name="Larimer F."/>
            <person name="Land M."/>
            <person name="Hauser L."/>
            <person name="Pelletier D.A."/>
            <person name="Kyrpides N."/>
            <person name="Anderson I."/>
            <person name="Oda Y."/>
            <person name="Harwood C.S."/>
            <person name="Richardson P."/>
        </authorList>
    </citation>
    <scope>NUCLEOTIDE SEQUENCE [LARGE SCALE GENOMIC DNA]</scope>
    <source>
        <strain>BisB18</strain>
    </source>
</reference>